<reference evidence="9" key="1">
    <citation type="journal article" date="2000" name="Science">
        <title>The genome sequence of Drosophila melanogaster.</title>
        <authorList>
            <person name="Adams M.D."/>
            <person name="Celniker S.E."/>
            <person name="Holt R.A."/>
            <person name="Evans C.A."/>
            <person name="Gocayne J.D."/>
            <person name="Amanatides P.G."/>
            <person name="Scherer S.E."/>
            <person name="Li P.W."/>
            <person name="Hoskins R.A."/>
            <person name="Galle R.F."/>
            <person name="George R.A."/>
            <person name="Lewis S.E."/>
            <person name="Richards S."/>
            <person name="Ashburner M."/>
            <person name="Henderson S.N."/>
            <person name="Sutton G.G."/>
            <person name="Wortman J.R."/>
            <person name="Yandell M.D."/>
            <person name="Zhang Q."/>
            <person name="Chen L.X."/>
            <person name="Brandon R.C."/>
            <person name="Rogers Y.-H.C."/>
            <person name="Blazej R.G."/>
            <person name="Champe M."/>
            <person name="Pfeiffer B.D."/>
            <person name="Wan K.H."/>
            <person name="Doyle C."/>
            <person name="Baxter E.G."/>
            <person name="Helt G."/>
            <person name="Nelson C.R."/>
            <person name="Miklos G.L.G."/>
            <person name="Abril J.F."/>
            <person name="Agbayani A."/>
            <person name="An H.-J."/>
            <person name="Andrews-Pfannkoch C."/>
            <person name="Baldwin D."/>
            <person name="Ballew R.M."/>
            <person name="Basu A."/>
            <person name="Baxendale J."/>
            <person name="Bayraktaroglu L."/>
            <person name="Beasley E.M."/>
            <person name="Beeson K.Y."/>
            <person name="Benos P.V."/>
            <person name="Berman B.P."/>
            <person name="Bhandari D."/>
            <person name="Bolshakov S."/>
            <person name="Borkova D."/>
            <person name="Botchan M.R."/>
            <person name="Bouck J."/>
            <person name="Brokstein P."/>
            <person name="Brottier P."/>
            <person name="Burtis K.C."/>
            <person name="Busam D.A."/>
            <person name="Butler H."/>
            <person name="Cadieu E."/>
            <person name="Center A."/>
            <person name="Chandra I."/>
            <person name="Cherry J.M."/>
            <person name="Cawley S."/>
            <person name="Dahlke C."/>
            <person name="Davenport L.B."/>
            <person name="Davies P."/>
            <person name="de Pablos B."/>
            <person name="Delcher A."/>
            <person name="Deng Z."/>
            <person name="Mays A.D."/>
            <person name="Dew I."/>
            <person name="Dietz S.M."/>
            <person name="Dodson K."/>
            <person name="Doup L.E."/>
            <person name="Downes M."/>
            <person name="Dugan-Rocha S."/>
            <person name="Dunkov B.C."/>
            <person name="Dunn P."/>
            <person name="Durbin K.J."/>
            <person name="Evangelista C.C."/>
            <person name="Ferraz C."/>
            <person name="Ferriera S."/>
            <person name="Fleischmann W."/>
            <person name="Fosler C."/>
            <person name="Gabrielian A.E."/>
            <person name="Garg N.S."/>
            <person name="Gelbart W.M."/>
            <person name="Glasser K."/>
            <person name="Glodek A."/>
            <person name="Gong F."/>
            <person name="Gorrell J.H."/>
            <person name="Gu Z."/>
            <person name="Guan P."/>
            <person name="Harris M."/>
            <person name="Harris N.L."/>
            <person name="Harvey D.A."/>
            <person name="Heiman T.J."/>
            <person name="Hernandez J.R."/>
            <person name="Houck J."/>
            <person name="Hostin D."/>
            <person name="Houston K.A."/>
            <person name="Howland T.J."/>
            <person name="Wei M.-H."/>
            <person name="Ibegwam C."/>
            <person name="Jalali M."/>
            <person name="Kalush F."/>
            <person name="Karpen G.H."/>
            <person name="Ke Z."/>
            <person name="Kennison J.A."/>
            <person name="Ketchum K.A."/>
            <person name="Kimmel B.E."/>
            <person name="Kodira C.D."/>
            <person name="Kraft C.L."/>
            <person name="Kravitz S."/>
            <person name="Kulp D."/>
            <person name="Lai Z."/>
            <person name="Lasko P."/>
            <person name="Lei Y."/>
            <person name="Levitsky A.A."/>
            <person name="Li J.H."/>
            <person name="Li Z."/>
            <person name="Liang Y."/>
            <person name="Lin X."/>
            <person name="Liu X."/>
            <person name="Mattei B."/>
            <person name="McIntosh T.C."/>
            <person name="McLeod M.P."/>
            <person name="McPherson D."/>
            <person name="Merkulov G."/>
            <person name="Milshina N.V."/>
            <person name="Mobarry C."/>
            <person name="Morris J."/>
            <person name="Moshrefi A."/>
            <person name="Mount S.M."/>
            <person name="Moy M."/>
            <person name="Murphy B."/>
            <person name="Murphy L."/>
            <person name="Muzny D.M."/>
            <person name="Nelson D.L."/>
            <person name="Nelson D.R."/>
            <person name="Nelson K.A."/>
            <person name="Nixon K."/>
            <person name="Nusskern D.R."/>
            <person name="Pacleb J.M."/>
            <person name="Palazzolo M."/>
            <person name="Pittman G.S."/>
            <person name="Pan S."/>
            <person name="Pollard J."/>
            <person name="Puri V."/>
            <person name="Reese M.G."/>
            <person name="Reinert K."/>
            <person name="Remington K."/>
            <person name="Saunders R.D.C."/>
            <person name="Scheeler F."/>
            <person name="Shen H."/>
            <person name="Shue B.C."/>
            <person name="Siden-Kiamos I."/>
            <person name="Simpson M."/>
            <person name="Skupski M.P."/>
            <person name="Smith T.J."/>
            <person name="Spier E."/>
            <person name="Spradling A.C."/>
            <person name="Stapleton M."/>
            <person name="Strong R."/>
            <person name="Sun E."/>
            <person name="Svirskas R."/>
            <person name="Tector C."/>
            <person name="Turner R."/>
            <person name="Venter E."/>
            <person name="Wang A.H."/>
            <person name="Wang X."/>
            <person name="Wang Z.-Y."/>
            <person name="Wassarman D.A."/>
            <person name="Weinstock G.M."/>
            <person name="Weissenbach J."/>
            <person name="Williams S.M."/>
            <person name="Woodage T."/>
            <person name="Worley K.C."/>
            <person name="Wu D."/>
            <person name="Yang S."/>
            <person name="Yao Q.A."/>
            <person name="Ye J."/>
            <person name="Yeh R.-F."/>
            <person name="Zaveri J.S."/>
            <person name="Zhan M."/>
            <person name="Zhang G."/>
            <person name="Zhao Q."/>
            <person name="Zheng L."/>
            <person name="Zheng X.H."/>
            <person name="Zhong F.N."/>
            <person name="Zhong W."/>
            <person name="Zhou X."/>
            <person name="Zhu S.C."/>
            <person name="Zhu X."/>
            <person name="Smith H.O."/>
            <person name="Gibbs R.A."/>
            <person name="Myers E.W."/>
            <person name="Rubin G.M."/>
            <person name="Venter J.C."/>
        </authorList>
    </citation>
    <scope>NUCLEOTIDE SEQUENCE [LARGE SCALE GENOMIC DNA]</scope>
    <source>
        <strain evidence="9">Berkeley</strain>
    </source>
</reference>
<reference evidence="9" key="2">
    <citation type="journal article" date="2002" name="Genome Biol.">
        <title>Annotation of the Drosophila melanogaster euchromatic genome: a systematic review.</title>
        <authorList>
            <person name="Misra S."/>
            <person name="Crosby M.A."/>
            <person name="Mungall C.J."/>
            <person name="Matthews B.B."/>
            <person name="Campbell K.S."/>
            <person name="Hradecky P."/>
            <person name="Huang Y."/>
            <person name="Kaminker J.S."/>
            <person name="Millburn G.H."/>
            <person name="Prochnik S.E."/>
            <person name="Smith C.D."/>
            <person name="Tupy J.L."/>
            <person name="Whitfield E.J."/>
            <person name="Bayraktaroglu L."/>
            <person name="Berman B.P."/>
            <person name="Bettencourt B.R."/>
            <person name="Celniker S.E."/>
            <person name="de Grey A.D.N.J."/>
            <person name="Drysdale R.A."/>
            <person name="Harris N.L."/>
            <person name="Richter J."/>
            <person name="Russo S."/>
            <person name="Schroeder A.J."/>
            <person name="Shu S.Q."/>
            <person name="Stapleton M."/>
            <person name="Yamada C."/>
            <person name="Ashburner M."/>
            <person name="Gelbart W.M."/>
            <person name="Rubin G.M."/>
            <person name="Lewis S.E."/>
        </authorList>
    </citation>
    <scope>GENOME REANNOTATION</scope>
    <source>
        <strain evidence="9">Berkeley</strain>
    </source>
</reference>
<reference evidence="6" key="3">
    <citation type="journal article" date="2002" name="Genome Biol.">
        <title>A Drosophila full-length cDNA resource.</title>
        <authorList>
            <person name="Stapleton M."/>
            <person name="Carlson J.W."/>
            <person name="Brokstein P."/>
            <person name="Yu C."/>
            <person name="Champe M."/>
            <person name="George R.A."/>
            <person name="Guarin H."/>
            <person name="Kronmiller B."/>
            <person name="Pacleb J.M."/>
            <person name="Park S."/>
            <person name="Wan K.H."/>
            <person name="Rubin G.M."/>
            <person name="Celniker S.E."/>
        </authorList>
    </citation>
    <scope>NUCLEOTIDE SEQUENCE [LARGE SCALE MRNA]</scope>
    <source>
        <strain evidence="6">Berkeley</strain>
        <tissue evidence="6">Embryo</tissue>
    </source>
</reference>
<reference evidence="7" key="4">
    <citation type="submission" date="2005-08" db="EMBL/GenBank/DDBJ databases">
        <authorList>
            <person name="Stapleton M."/>
            <person name="Carlson J."/>
            <person name="Chavez C."/>
            <person name="Frise E."/>
            <person name="George R."/>
            <person name="Pacleb J."/>
            <person name="Park S."/>
            <person name="Wan K."/>
            <person name="Yu C."/>
            <person name="Celniker S."/>
        </authorList>
    </citation>
    <scope>NUCLEOTIDE SEQUENCE [LARGE SCALE MRNA]</scope>
</reference>
<reference evidence="4" key="5">
    <citation type="journal article" date="2022" name="J. Cell Sci.">
        <title>Reduction of nucleolar NOC1 leads to the accumulation of pre-rRNAs and induces Xrp1, affecting growth and resulting in cell competition.</title>
        <authorList>
            <person name="Destefanis F."/>
            <person name="Manara V."/>
            <person name="Santarelli S."/>
            <person name="Zola S."/>
            <person name="Brambilla M."/>
            <person name="Viola G."/>
            <person name="Maragno P."/>
            <person name="Signoria I."/>
            <person name="Viero G."/>
            <person name="Pasini M.E."/>
            <person name="Penzo M."/>
            <person name="Bellosta P."/>
        </authorList>
    </citation>
    <scope>FUNCTION</scope>
    <scope>SUBCELLULAR LOCATION</scope>
    <scope>DEVELOPMENTAL STAGE</scope>
    <scope>DISRUPTION PHENOTYPE</scope>
</reference>
<name>NOC1L_DROME</name>
<proteinExistence type="evidence at transcript level"/>
<accession>Q9VTE6</accession>
<accession>Q8MSS0</accession>
<feature type="chain" id="PRO_0000459994" description="Nucleolar complex protein 1">
    <location>
        <begin position="1"/>
        <end position="1174"/>
    </location>
</feature>
<feature type="region of interest" description="Disordered" evidence="1">
    <location>
        <begin position="1"/>
        <end position="20"/>
    </location>
</feature>
<feature type="region of interest" description="Disordered" evidence="1">
    <location>
        <begin position="29"/>
        <end position="237"/>
    </location>
</feature>
<feature type="region of interest" description="Disordered" evidence="1">
    <location>
        <begin position="715"/>
        <end position="742"/>
    </location>
</feature>
<feature type="region of interest" description="Disordered" evidence="1">
    <location>
        <begin position="893"/>
        <end position="922"/>
    </location>
</feature>
<feature type="region of interest" description="Disordered" evidence="1">
    <location>
        <begin position="944"/>
        <end position="1085"/>
    </location>
</feature>
<feature type="region of interest" description="Disordered" evidence="1">
    <location>
        <begin position="1116"/>
        <end position="1174"/>
    </location>
</feature>
<feature type="compositionally biased region" description="Basic and acidic residues" evidence="1">
    <location>
        <begin position="33"/>
        <end position="63"/>
    </location>
</feature>
<feature type="compositionally biased region" description="Polar residues" evidence="1">
    <location>
        <begin position="95"/>
        <end position="104"/>
    </location>
</feature>
<feature type="compositionally biased region" description="Basic and acidic residues" evidence="1">
    <location>
        <begin position="113"/>
        <end position="122"/>
    </location>
</feature>
<feature type="compositionally biased region" description="Basic and acidic residues" evidence="1">
    <location>
        <begin position="176"/>
        <end position="200"/>
    </location>
</feature>
<feature type="compositionally biased region" description="Acidic residues" evidence="1">
    <location>
        <begin position="207"/>
        <end position="216"/>
    </location>
</feature>
<feature type="compositionally biased region" description="Acidic residues" evidence="1">
    <location>
        <begin position="715"/>
        <end position="724"/>
    </location>
</feature>
<feature type="compositionally biased region" description="Basic and acidic residues" evidence="1">
    <location>
        <begin position="725"/>
        <end position="739"/>
    </location>
</feature>
<feature type="compositionally biased region" description="Basic and acidic residues" evidence="1">
    <location>
        <begin position="897"/>
        <end position="906"/>
    </location>
</feature>
<feature type="compositionally biased region" description="Acidic residues" evidence="1">
    <location>
        <begin position="907"/>
        <end position="916"/>
    </location>
</feature>
<feature type="compositionally biased region" description="Acidic residues" evidence="1">
    <location>
        <begin position="945"/>
        <end position="954"/>
    </location>
</feature>
<feature type="compositionally biased region" description="Acidic residues" evidence="1">
    <location>
        <begin position="981"/>
        <end position="1038"/>
    </location>
</feature>
<feature type="compositionally biased region" description="Acidic residues" evidence="1">
    <location>
        <begin position="1048"/>
        <end position="1065"/>
    </location>
</feature>
<feature type="compositionally biased region" description="Basic and acidic residues" evidence="1">
    <location>
        <begin position="1127"/>
        <end position="1143"/>
    </location>
</feature>
<feature type="compositionally biased region" description="Low complexity" evidence="1">
    <location>
        <begin position="1156"/>
        <end position="1166"/>
    </location>
</feature>
<feature type="sequence conflict" description="In Ref. 3; AAM50008." evidence="4" ref="3">
    <original>N</original>
    <variation>K</variation>
    <location>
        <position position="70"/>
    </location>
</feature>
<feature type="sequence conflict" description="In Ref. 3; AAM50008." evidence="4" ref="3">
    <original>VAS</original>
    <variation>EAP</variation>
    <location>
        <begin position="94"/>
        <end position="96"/>
    </location>
</feature>
<feature type="sequence conflict" description="In Ref. 3; AAM50008." evidence="4" ref="3">
    <original>R</original>
    <variation>G</variation>
    <location>
        <position position="118"/>
    </location>
</feature>
<feature type="sequence conflict" description="In Ref. 3; AAM50008." evidence="4" ref="3">
    <original>N</original>
    <variation>T</variation>
    <location>
        <position position="127"/>
    </location>
</feature>
<feature type="sequence conflict" description="In Ref. 3; AAM50008." evidence="4" ref="3">
    <original>S</original>
    <variation>T</variation>
    <location>
        <position position="207"/>
    </location>
</feature>
<feature type="sequence conflict" description="In Ref. 3; AAM50008." evidence="4" ref="3">
    <original>N</original>
    <variation>S</variation>
    <location>
        <position position="729"/>
    </location>
</feature>
<feature type="sequence conflict" description="In Ref. 3; AAM50008." evidence="4" ref="3">
    <original>D</original>
    <variation>Y</variation>
    <location>
        <position position="1002"/>
    </location>
</feature>
<feature type="sequence conflict" description="In Ref. 3; AAM50008." evidence="4" ref="3">
    <location>
        <position position="1024"/>
    </location>
</feature>
<protein>
    <recommendedName>
        <fullName evidence="3">Nucleolar complex protein 1</fullName>
    </recommendedName>
</protein>
<dbReference type="EMBL" id="AE014296">
    <property type="protein sequence ID" value="AAF50106.3"/>
    <property type="molecule type" value="Genomic_DNA"/>
</dbReference>
<dbReference type="EMBL" id="AY118639">
    <property type="protein sequence ID" value="AAM50008.1"/>
    <property type="molecule type" value="mRNA"/>
</dbReference>
<dbReference type="EMBL" id="BT023839">
    <property type="protein sequence ID" value="AAZ86760.1"/>
    <property type="molecule type" value="mRNA"/>
</dbReference>
<dbReference type="RefSeq" id="NP_648431.3">
    <property type="nucleotide sequence ID" value="NM_140174.5"/>
</dbReference>
<dbReference type="SMR" id="Q9VTE6"/>
<dbReference type="FunCoup" id="Q9VTE6">
    <property type="interactions" value="1446"/>
</dbReference>
<dbReference type="IntAct" id="Q9VTE6">
    <property type="interactions" value="3"/>
</dbReference>
<dbReference type="STRING" id="7227.FBpp0075937"/>
<dbReference type="PaxDb" id="7227-FBpp0075937"/>
<dbReference type="EnsemblMetazoa" id="FBtr0076207">
    <property type="protein sequence ID" value="FBpp0075937"/>
    <property type="gene ID" value="FBgn0036124"/>
</dbReference>
<dbReference type="GeneID" id="39240"/>
<dbReference type="KEGG" id="dme:Dmel_CG7839"/>
<dbReference type="UCSC" id="CG7839-RA">
    <property type="organism name" value="d. melanogaster"/>
</dbReference>
<dbReference type="AGR" id="FB:FBgn0036124"/>
<dbReference type="CTD" id="39240"/>
<dbReference type="FlyBase" id="FBgn0036124">
    <property type="gene designation" value="Noc1"/>
</dbReference>
<dbReference type="VEuPathDB" id="VectorBase:FBgn0036124"/>
<dbReference type="eggNOG" id="KOG2038">
    <property type="taxonomic scope" value="Eukaryota"/>
</dbReference>
<dbReference type="GeneTree" id="ENSGT00390000006395"/>
<dbReference type="HOGENOM" id="CLU_003417_3_1_1"/>
<dbReference type="OMA" id="EIWCNDE"/>
<dbReference type="OrthoDB" id="28947at2759"/>
<dbReference type="BioGRID-ORCS" id="39240">
    <property type="hits" value="0 hits in 1 CRISPR screen"/>
</dbReference>
<dbReference type="ChiTaRS" id="CG7839">
    <property type="organism name" value="fly"/>
</dbReference>
<dbReference type="GenomeRNAi" id="39240"/>
<dbReference type="Proteomes" id="UP000000803">
    <property type="component" value="Chromosome 3L"/>
</dbReference>
<dbReference type="Bgee" id="FBgn0036124">
    <property type="expression patterns" value="Expressed in posterior terminal follicle cell in ovary and 140 other cell types or tissues"/>
</dbReference>
<dbReference type="ExpressionAtlas" id="Q9VTE6">
    <property type="expression patterns" value="baseline and differential"/>
</dbReference>
<dbReference type="GO" id="GO:0030690">
    <property type="term" value="C:Noc1p-Noc2p complex"/>
    <property type="evidence" value="ECO:0000250"/>
    <property type="project" value="FlyBase"/>
</dbReference>
<dbReference type="GO" id="GO:0005730">
    <property type="term" value="C:nucleolus"/>
    <property type="evidence" value="ECO:0000314"/>
    <property type="project" value="FlyBase"/>
</dbReference>
<dbReference type="GO" id="GO:0005634">
    <property type="term" value="C:nucleus"/>
    <property type="evidence" value="ECO:0000318"/>
    <property type="project" value="GO_Central"/>
</dbReference>
<dbReference type="GO" id="GO:0006364">
    <property type="term" value="P:rRNA processing"/>
    <property type="evidence" value="ECO:0000315"/>
    <property type="project" value="FlyBase"/>
</dbReference>
<dbReference type="InterPro" id="IPR016024">
    <property type="entry name" value="ARM-type_fold"/>
</dbReference>
<dbReference type="InterPro" id="IPR005612">
    <property type="entry name" value="CCAAT-binding_factor"/>
</dbReference>
<dbReference type="InterPro" id="IPR040155">
    <property type="entry name" value="CEBPZ/Mak21-like"/>
</dbReference>
<dbReference type="PANTHER" id="PTHR12048">
    <property type="entry name" value="CCAAT-BINDING FACTOR-RELATED"/>
    <property type="match status" value="1"/>
</dbReference>
<dbReference type="PANTHER" id="PTHR12048:SF0">
    <property type="entry name" value="CCAAT_ENHANCER-BINDING PROTEIN ZETA"/>
    <property type="match status" value="1"/>
</dbReference>
<dbReference type="Pfam" id="PF03914">
    <property type="entry name" value="CBF"/>
    <property type="match status" value="1"/>
</dbReference>
<dbReference type="SUPFAM" id="SSF48371">
    <property type="entry name" value="ARM repeat"/>
    <property type="match status" value="1"/>
</dbReference>
<sequence>MPAAVATGVQFGGPPKNKKIVFDDSGEAVVKQNKKEHPQRPKFEGKEQVKKPQKIKFGEDGKAKGAKSFNKNHQKPDFANKPQRIKFGDDGEQVASKSFNQNHKNGPKPQKIKFGEDREAVHQKPFNKNNHKHNGQKSDFANKPQKIKFTDDGEDEVTANSSNTKTEPTKKSQKIKFGDDGESKENFKKPQRIKFDEDGAGKNVSDSDGDSDEELGDSISKKHNKYQSKIDEDEESQKKWYHVHPDYPSTDEVLDMKENDQLELYNLCKNSFEAEKITFNKRNPSDARWLQTALHKGTAKDRANAGALLVTSNPLGNLEALSTLIGFCKISNKASNDVIAVLTDLWQEVLLPPNRKLLAVHTRGADWKKLKKDENLRNEQKRRIYAYWHFESELKDQYHEFLKNVMQGLQTGQEHNKNSSIVSAARLLAYAPEKEQLLLTMLVNKLGDPIAKIASKALHHLSEVAQKHPNMCGVIVAEAEKLLFRNNISERAQHFALCFLSSIAPSGRPEVCTKLVNICFALFKVLVQKGAVNNRTMQAILRCLQKAIVEAKPAKDSNGELLTKEMQDTIYRLVHLADIRVAVQTLGLLLQLVAVKTEKSDRFYNALYVKLLDLNLINVGSKTAAHLLHIVHRAIHIDNHVARAQAFVKRLLQLTLYAPPHIAAGCLIVIHKLLRMRRELIGGTGASEEVEEGSKVVLPISADLDKFGSDDEEVYEDVKDEADDTKDSNPLEEKADNDVKSSASSWHHARVAATEAKVRDIDSCKYDPYHRVPAFAGAAYALRHELLLLRQHYHPTVQVFAEQILQQSRIDYYGDPLRDFGLPHFLERFAFKNPKKLEASQAAENATVAHKRYMAHGARGRPVKSLTKANCTEDEMFIFNFLEHKRRQAEIVAQNKKQKEIKKDAAEEGDDGEAGEEYLKEGEVDDDEFEAYLDGYFGKKFKEGVDEEQDEEELNFLQELGGEIKKDKSKDKKKKKQSDKAEDEMDDIDDDWGDDDLAEDEDDEIEGEDQSDDETGSIDLQPLDDDDDDDDDDDDEGSISEGGPGDSDSSDAPESPDEEDDDDEDAPPRSKKSRKDSTDMVGGRSFAKTLKQSHDMSSLFAAADDFSSLLEETAKVKGQGTSNAVFNKDKSSDKQLKWEENRRSNSKSYKGKKFAGKPAAKGGRPQKAGKKRKH</sequence>
<evidence type="ECO:0000256" key="1">
    <source>
        <dbReference type="SAM" id="MobiDB-lite"/>
    </source>
</evidence>
<evidence type="ECO:0000269" key="2">
    <source>
    </source>
</evidence>
<evidence type="ECO:0000303" key="3">
    <source>
    </source>
</evidence>
<evidence type="ECO:0000305" key="4"/>
<evidence type="ECO:0000305" key="5">
    <source>
    </source>
</evidence>
<evidence type="ECO:0000312" key="6">
    <source>
        <dbReference type="EMBL" id="AAM50008.1"/>
    </source>
</evidence>
<evidence type="ECO:0000312" key="7">
    <source>
        <dbReference type="EMBL" id="AAZ86760.1"/>
    </source>
</evidence>
<evidence type="ECO:0000312" key="8">
    <source>
        <dbReference type="FlyBase" id="FBgn0036124"/>
    </source>
</evidence>
<evidence type="ECO:0000312" key="9">
    <source>
        <dbReference type="Proteomes" id="UP000000803"/>
    </source>
</evidence>
<keyword id="KW-0539">Nucleus</keyword>
<keyword id="KW-1185">Reference proteome</keyword>
<gene>
    <name evidence="3 8" type="primary">Noc1</name>
    <name evidence="8" type="ORF">CG7839</name>
</gene>
<organism evidence="9">
    <name type="scientific">Drosophila melanogaster</name>
    <name type="common">Fruit fly</name>
    <dbReference type="NCBI Taxonomy" id="7227"/>
    <lineage>
        <taxon>Eukaryota</taxon>
        <taxon>Metazoa</taxon>
        <taxon>Ecdysozoa</taxon>
        <taxon>Arthropoda</taxon>
        <taxon>Hexapoda</taxon>
        <taxon>Insecta</taxon>
        <taxon>Pterygota</taxon>
        <taxon>Neoptera</taxon>
        <taxon>Endopterygota</taxon>
        <taxon>Diptera</taxon>
        <taxon>Brachycera</taxon>
        <taxon>Muscomorpha</taxon>
        <taxon>Ephydroidea</taxon>
        <taxon>Drosophilidae</taxon>
        <taxon>Drosophila</taxon>
        <taxon>Sophophora</taxon>
    </lineage>
</organism>
<comment type="function">
    <text evidence="2 5">Involved in rRNA processing and ribosome maturation (PubMed:36314272). May also act as a transcription factor (Probable).</text>
</comment>
<comment type="subcellular location">
    <subcellularLocation>
        <location evidence="2">Nucleus</location>
        <location evidence="2">Nucleolus</location>
    </subcellularLocation>
</comment>
<comment type="developmental stage">
    <text evidence="2">Expressed in cells of the wing imaginal disc.</text>
</comment>
<comment type="disruption phenotype">
    <text evidence="2">Larval lethal between first and second instar with reduced larval size (PubMed:36314272). Conditional RNAi-mediated knock-down in proliferating cells of the eye and antenna imaginal discs is viable but results in small eye size and disorganized ommatidia, possibly due to excessive apoptosis (PubMed:36314272). Conditional RNAi-mediated knock-down in cells of the prothoracic gland impedes pupation, probably due to reduced ecdysone hormone levels (PubMed:36314272). Conditional RNAi-mediated knock-down in fat body cells delays larval development, induces dyslipidemia, and is lethal between late third instar and pupal stages (PubMed:36314272). Larvae also lose the ability to remotely regulate the release of insulin-like peptides from insulin-producing cells in the brain (PubMed:36314272). Conditional RNAi-mediated knock-down in cells of the wing imaginal disc delays larval development and pupation, and is usually pupal lethal (PubMed:36314272). A small number of adults survive, but with small wings presenting morphological defects in the dorsal side, probably caused by excessive apoptosis due to proteotoxic stress (PubMed:36314272).</text>
</comment>
<comment type="similarity">
    <text evidence="4">Belongs to the CBF/MAK21 family.</text>
</comment>